<reference key="1">
    <citation type="journal article" date="2005" name="Nature">
        <title>Genomic sequence of the pathogenic and allergenic filamentous fungus Aspergillus fumigatus.</title>
        <authorList>
            <person name="Nierman W.C."/>
            <person name="Pain A."/>
            <person name="Anderson M.J."/>
            <person name="Wortman J.R."/>
            <person name="Kim H.S."/>
            <person name="Arroyo J."/>
            <person name="Berriman M."/>
            <person name="Abe K."/>
            <person name="Archer D.B."/>
            <person name="Bermejo C."/>
            <person name="Bennett J.W."/>
            <person name="Bowyer P."/>
            <person name="Chen D."/>
            <person name="Collins M."/>
            <person name="Coulsen R."/>
            <person name="Davies R."/>
            <person name="Dyer P.S."/>
            <person name="Farman M.L."/>
            <person name="Fedorova N."/>
            <person name="Fedorova N.D."/>
            <person name="Feldblyum T.V."/>
            <person name="Fischer R."/>
            <person name="Fosker N."/>
            <person name="Fraser A."/>
            <person name="Garcia J.L."/>
            <person name="Garcia M.J."/>
            <person name="Goble A."/>
            <person name="Goldman G.H."/>
            <person name="Gomi K."/>
            <person name="Griffith-Jones S."/>
            <person name="Gwilliam R."/>
            <person name="Haas B.J."/>
            <person name="Haas H."/>
            <person name="Harris D.E."/>
            <person name="Horiuchi H."/>
            <person name="Huang J."/>
            <person name="Humphray S."/>
            <person name="Jimenez J."/>
            <person name="Keller N."/>
            <person name="Khouri H."/>
            <person name="Kitamoto K."/>
            <person name="Kobayashi T."/>
            <person name="Konzack S."/>
            <person name="Kulkarni R."/>
            <person name="Kumagai T."/>
            <person name="Lafton A."/>
            <person name="Latge J.-P."/>
            <person name="Li W."/>
            <person name="Lord A."/>
            <person name="Lu C."/>
            <person name="Majoros W.H."/>
            <person name="May G.S."/>
            <person name="Miller B.L."/>
            <person name="Mohamoud Y."/>
            <person name="Molina M."/>
            <person name="Monod M."/>
            <person name="Mouyna I."/>
            <person name="Mulligan S."/>
            <person name="Murphy L.D."/>
            <person name="O'Neil S."/>
            <person name="Paulsen I."/>
            <person name="Penalva M.A."/>
            <person name="Pertea M."/>
            <person name="Price C."/>
            <person name="Pritchard B.L."/>
            <person name="Quail M.A."/>
            <person name="Rabbinowitsch E."/>
            <person name="Rawlins N."/>
            <person name="Rajandream M.A."/>
            <person name="Reichard U."/>
            <person name="Renauld H."/>
            <person name="Robson G.D."/>
            <person name="Rodriguez de Cordoba S."/>
            <person name="Rodriguez-Pena J.M."/>
            <person name="Ronning C.M."/>
            <person name="Rutter S."/>
            <person name="Salzberg S.L."/>
            <person name="Sanchez M."/>
            <person name="Sanchez-Ferrero J.C."/>
            <person name="Saunders D."/>
            <person name="Seeger K."/>
            <person name="Squares R."/>
            <person name="Squares S."/>
            <person name="Takeuchi M."/>
            <person name="Tekaia F."/>
            <person name="Turner G."/>
            <person name="Vazquez de Aldana C.R."/>
            <person name="Weidman J."/>
            <person name="White O."/>
            <person name="Woodward J.R."/>
            <person name="Yu J.-H."/>
            <person name="Fraser C.M."/>
            <person name="Galagan J.E."/>
            <person name="Asai K."/>
            <person name="Machida M."/>
            <person name="Hall N."/>
            <person name="Barrell B.G."/>
            <person name="Denning D.W."/>
        </authorList>
    </citation>
    <scope>NUCLEOTIDE SEQUENCE [LARGE SCALE GENOMIC DNA]</scope>
    <source>
        <strain>ATCC MYA-4609 / CBS 101355 / FGSC A1100 / Af293</strain>
    </source>
</reference>
<name>MUS81_ASPFU</name>
<evidence type="ECO:0000250" key="1"/>
<evidence type="ECO:0000256" key="2">
    <source>
        <dbReference type="SAM" id="MobiDB-lite"/>
    </source>
</evidence>
<evidence type="ECO:0000305" key="3"/>
<proteinExistence type="inferred from homology"/>
<gene>
    <name type="primary">mus81</name>
    <name type="ORF">AFUA_3G12750</name>
</gene>
<feature type="chain" id="PRO_0000223640" description="Crossover junction endonuclease mus81">
    <location>
        <begin position="1"/>
        <end position="596"/>
    </location>
</feature>
<feature type="domain" description="ERCC4">
    <location>
        <begin position="299"/>
        <end position="405"/>
    </location>
</feature>
<feature type="region of interest" description="Disordered" evidence="2">
    <location>
        <begin position="77"/>
        <end position="113"/>
    </location>
</feature>
<feature type="region of interest" description="Disordered" evidence="2">
    <location>
        <begin position="228"/>
        <end position="278"/>
    </location>
</feature>
<feature type="compositionally biased region" description="Polar residues" evidence="2">
    <location>
        <begin position="229"/>
        <end position="244"/>
    </location>
</feature>
<feature type="compositionally biased region" description="Polar residues" evidence="2">
    <location>
        <begin position="253"/>
        <end position="267"/>
    </location>
</feature>
<protein>
    <recommendedName>
        <fullName>Crossover junction endonuclease mus81</fullName>
        <ecNumber>3.1.22.-</ecNumber>
    </recommendedName>
</protein>
<keyword id="KW-0227">DNA damage</keyword>
<keyword id="KW-0233">DNA recombination</keyword>
<keyword id="KW-0234">DNA repair</keyword>
<keyword id="KW-0255">Endonuclease</keyword>
<keyword id="KW-0378">Hydrolase</keyword>
<keyword id="KW-0460">Magnesium</keyword>
<keyword id="KW-0469">Meiosis</keyword>
<keyword id="KW-0479">Metal-binding</keyword>
<keyword id="KW-0540">Nuclease</keyword>
<keyword id="KW-0539">Nucleus</keyword>
<keyword id="KW-1185">Reference proteome</keyword>
<dbReference type="EC" id="3.1.22.-"/>
<dbReference type="EMBL" id="AAHF01000002">
    <property type="protein sequence ID" value="EAL92308.1"/>
    <property type="molecule type" value="Genomic_DNA"/>
</dbReference>
<dbReference type="RefSeq" id="XP_754346.1">
    <property type="nucleotide sequence ID" value="XM_749253.1"/>
</dbReference>
<dbReference type="SMR" id="Q4WYE5"/>
<dbReference type="FunCoup" id="Q4WYE5">
    <property type="interactions" value="189"/>
</dbReference>
<dbReference type="STRING" id="330879.Q4WYE5"/>
<dbReference type="EnsemblFungi" id="EAL92308">
    <property type="protein sequence ID" value="EAL92308"/>
    <property type="gene ID" value="AFUA_3G12750"/>
</dbReference>
<dbReference type="GeneID" id="3512247"/>
<dbReference type="KEGG" id="afm:AFUA_3G12750"/>
<dbReference type="VEuPathDB" id="FungiDB:Afu3g12750"/>
<dbReference type="eggNOG" id="KOG2379">
    <property type="taxonomic scope" value="Eukaryota"/>
</dbReference>
<dbReference type="HOGENOM" id="CLU_014329_1_0_1"/>
<dbReference type="InParanoid" id="Q4WYE5"/>
<dbReference type="OMA" id="ELGDAMW"/>
<dbReference type="OrthoDB" id="5963188at2759"/>
<dbReference type="Proteomes" id="UP000002530">
    <property type="component" value="Chromosome 3"/>
</dbReference>
<dbReference type="GO" id="GO:0048476">
    <property type="term" value="C:Holliday junction resolvase complex"/>
    <property type="evidence" value="ECO:0000318"/>
    <property type="project" value="GO_Central"/>
</dbReference>
<dbReference type="GO" id="GO:0005634">
    <property type="term" value="C:nucleus"/>
    <property type="evidence" value="ECO:0000318"/>
    <property type="project" value="GO_Central"/>
</dbReference>
<dbReference type="GO" id="GO:0048257">
    <property type="term" value="F:3'-flap endonuclease activity"/>
    <property type="evidence" value="ECO:0000318"/>
    <property type="project" value="GO_Central"/>
</dbReference>
<dbReference type="GO" id="GO:0008821">
    <property type="term" value="F:crossover junction DNA endonuclease activity"/>
    <property type="evidence" value="ECO:0007669"/>
    <property type="project" value="EnsemblFungi"/>
</dbReference>
<dbReference type="GO" id="GO:0003677">
    <property type="term" value="F:DNA binding"/>
    <property type="evidence" value="ECO:0007669"/>
    <property type="project" value="InterPro"/>
</dbReference>
<dbReference type="GO" id="GO:0046872">
    <property type="term" value="F:metal ion binding"/>
    <property type="evidence" value="ECO:0007669"/>
    <property type="project" value="UniProtKB-KW"/>
</dbReference>
<dbReference type="GO" id="GO:0006308">
    <property type="term" value="P:DNA catabolic process"/>
    <property type="evidence" value="ECO:0007669"/>
    <property type="project" value="InterPro"/>
</dbReference>
<dbReference type="GO" id="GO:0000727">
    <property type="term" value="P:double-strand break repair via break-induced replication"/>
    <property type="evidence" value="ECO:0000318"/>
    <property type="project" value="GO_Central"/>
</dbReference>
<dbReference type="GO" id="GO:0033314">
    <property type="term" value="P:mitotic DNA replication checkpoint signaling"/>
    <property type="evidence" value="ECO:0007669"/>
    <property type="project" value="EnsemblFungi"/>
</dbReference>
<dbReference type="GO" id="GO:0031573">
    <property type="term" value="P:mitotic intra-S DNA damage checkpoint signaling"/>
    <property type="evidence" value="ECO:0000318"/>
    <property type="project" value="GO_Central"/>
</dbReference>
<dbReference type="GO" id="GO:0031297">
    <property type="term" value="P:replication fork processing"/>
    <property type="evidence" value="ECO:0007669"/>
    <property type="project" value="EnsemblFungi"/>
</dbReference>
<dbReference type="GO" id="GO:0000712">
    <property type="term" value="P:resolution of meiotic recombination intermediates"/>
    <property type="evidence" value="ECO:0000318"/>
    <property type="project" value="GO_Central"/>
</dbReference>
<dbReference type="CDD" id="cd21036">
    <property type="entry name" value="WH_MUS81"/>
    <property type="match status" value="1"/>
</dbReference>
<dbReference type="CDD" id="cd20074">
    <property type="entry name" value="XPF_nuclease_Mus81"/>
    <property type="match status" value="1"/>
</dbReference>
<dbReference type="FunFam" id="1.10.10.10:FF:000307">
    <property type="entry name" value="Crossover junction endonuclease MUS81"/>
    <property type="match status" value="1"/>
</dbReference>
<dbReference type="FunFam" id="3.40.50.10130:FF:000003">
    <property type="entry name" value="Crossover junction endonuclease MUS81"/>
    <property type="match status" value="1"/>
</dbReference>
<dbReference type="FunFam" id="1.10.150.670:FF:000006">
    <property type="entry name" value="Crossover junction endonuclease mus81"/>
    <property type="match status" value="1"/>
</dbReference>
<dbReference type="FunFam" id="1.10.150.110:FF:000001">
    <property type="entry name" value="Putative Crossover junction endonuclease MUS81"/>
    <property type="match status" value="1"/>
</dbReference>
<dbReference type="Gene3D" id="3.40.50.10130">
    <property type="match status" value="1"/>
</dbReference>
<dbReference type="Gene3D" id="1.10.150.670">
    <property type="entry name" value="Crossover junction endonuclease EME1, DNA-binding domain"/>
    <property type="match status" value="1"/>
</dbReference>
<dbReference type="Gene3D" id="1.10.150.110">
    <property type="entry name" value="DNA polymerase beta, N-terminal domain-like"/>
    <property type="match status" value="1"/>
</dbReference>
<dbReference type="Gene3D" id="1.10.10.10">
    <property type="entry name" value="Winged helix-like DNA-binding domain superfamily/Winged helix DNA-binding domain"/>
    <property type="match status" value="1"/>
</dbReference>
<dbReference type="InterPro" id="IPR027421">
    <property type="entry name" value="DNA_pol_lamdba_lyase_dom_sf"/>
</dbReference>
<dbReference type="InterPro" id="IPR042530">
    <property type="entry name" value="EME1/EME2_C"/>
</dbReference>
<dbReference type="InterPro" id="IPR006166">
    <property type="entry name" value="ERCC4_domain"/>
</dbReference>
<dbReference type="InterPro" id="IPR033309">
    <property type="entry name" value="Mus81"/>
</dbReference>
<dbReference type="InterPro" id="IPR011335">
    <property type="entry name" value="Restrct_endonuc-II-like"/>
</dbReference>
<dbReference type="InterPro" id="IPR036388">
    <property type="entry name" value="WH-like_DNA-bd_sf"/>
</dbReference>
<dbReference type="InterPro" id="IPR047417">
    <property type="entry name" value="WH_MUS81"/>
</dbReference>
<dbReference type="InterPro" id="IPR047416">
    <property type="entry name" value="XPF_nuclease_Mus81"/>
</dbReference>
<dbReference type="PANTHER" id="PTHR13451">
    <property type="entry name" value="CLASS II CROSSOVER JUNCTION ENDONUCLEASE MUS81"/>
    <property type="match status" value="1"/>
</dbReference>
<dbReference type="PANTHER" id="PTHR13451:SF0">
    <property type="entry name" value="CROSSOVER JUNCTION ENDONUCLEASE MUS81"/>
    <property type="match status" value="1"/>
</dbReference>
<dbReference type="Pfam" id="PF02732">
    <property type="entry name" value="ERCC4"/>
    <property type="match status" value="1"/>
</dbReference>
<dbReference type="Pfam" id="PF21136">
    <property type="entry name" value="MUS81-like_WH"/>
    <property type="match status" value="1"/>
</dbReference>
<dbReference type="SMART" id="SM00891">
    <property type="entry name" value="ERCC4"/>
    <property type="match status" value="1"/>
</dbReference>
<dbReference type="SUPFAM" id="SSF47802">
    <property type="entry name" value="DNA polymerase beta, N-terminal domain-like"/>
    <property type="match status" value="1"/>
</dbReference>
<dbReference type="SUPFAM" id="SSF52980">
    <property type="entry name" value="Restriction endonuclease-like"/>
    <property type="match status" value="1"/>
</dbReference>
<sequence>MSESCANPLLLEWIKEWLDQARERNSKGVTVYKKAYESMKACPLVFQHPSEAQQLNGLGPKLCERLTEKLKAYCEENGLPMPEHPQKAAASKRTSDEGVDDPPAKKPRKAKPYVPSLRSGPYALLLGLATLDENASQGLTKAQLIEKAQPYCDSSFTAPPDPSKFYTAWNSMKTLLQKELVYEHGRPLRRYALTEEGWEVAKRIKKTLPGGDLNTLAFRHQTGILSIEQGDSSTHVRSNTSTSAAPGPRDNDNNIVAQESLNGNNDEPIQIQDNDRGRDPIDEIGIEPIILPANSFTIQLVLDTREVRSSKDRDYIANELSKKGITPEVRALELGDAMWVARCNDPTFLSQYGEECNEVMLDWIVERKRMDDLLGSIKDGRFHEQKFRLRRSGIKNVIYLIEEFAITHDVGSASAMKYQEMMASAIASTQVVNGYFVKQTRNLDDTIRYLARMTYLLQKMYCFSPPTHTLSLIPSRQLSSAQSYLTTLERLRARDPSVTYSVTFSTFSALTSKSDILSLRDVFLKMLMCTRGVTGEKALAIQKRWSTPREFVEAFERLDEKGREDMVFERTKTLVGRKKMGKVLSKKIADIWGTGG</sequence>
<organism>
    <name type="scientific">Aspergillus fumigatus (strain ATCC MYA-4609 / CBS 101355 / FGSC A1100 / Af293)</name>
    <name type="common">Neosartorya fumigata</name>
    <dbReference type="NCBI Taxonomy" id="330879"/>
    <lineage>
        <taxon>Eukaryota</taxon>
        <taxon>Fungi</taxon>
        <taxon>Dikarya</taxon>
        <taxon>Ascomycota</taxon>
        <taxon>Pezizomycotina</taxon>
        <taxon>Eurotiomycetes</taxon>
        <taxon>Eurotiomycetidae</taxon>
        <taxon>Eurotiales</taxon>
        <taxon>Aspergillaceae</taxon>
        <taxon>Aspergillus</taxon>
        <taxon>Aspergillus subgen. Fumigati</taxon>
    </lineage>
</organism>
<accession>Q4WYE5</accession>
<comment type="function">
    <text evidence="1">Interacts with eme1 to form a DNA structure-specific endonuclease with substrate preference for branched DNA structures with a 5'-end at the branch nick. Typical substrates include 3'-flap structures, D-loops, replication forks and nicked Holliday junctions. May be required in mitosis for the processing of stalled or collapsed replication fork intermediates. May be required in meiosis for the repair of meiosis-specific double strand breaks subsequent to single-end invasion (SEI) (By similarity).</text>
</comment>
<comment type="cofactor">
    <cofactor evidence="1">
        <name>Mg(2+)</name>
        <dbReference type="ChEBI" id="CHEBI:18420"/>
    </cofactor>
</comment>
<comment type="subunit">
    <text evidence="1">Interacts with eme1.</text>
</comment>
<comment type="subcellular location">
    <subcellularLocation>
        <location evidence="1">Nucleus</location>
    </subcellularLocation>
</comment>
<comment type="similarity">
    <text evidence="3">Belongs to the XPF family.</text>
</comment>